<organism>
    <name type="scientific">Acetivibrio thermocellus (strain ATCC 27405 / DSM 1237 / JCM 9322 / NBRC 103400 / NCIMB 10682 / NRRL B-4536 / VPI 7372)</name>
    <name type="common">Clostridium thermocellum</name>
    <dbReference type="NCBI Taxonomy" id="203119"/>
    <lineage>
        <taxon>Bacteria</taxon>
        <taxon>Bacillati</taxon>
        <taxon>Bacillota</taxon>
        <taxon>Clostridia</taxon>
        <taxon>Eubacteriales</taxon>
        <taxon>Oscillospiraceae</taxon>
        <taxon>Acetivibrio</taxon>
    </lineage>
</organism>
<feature type="chain" id="PRO_1000058303" description="tRNA pseudouridine synthase A">
    <location>
        <begin position="1"/>
        <end position="244"/>
    </location>
</feature>
<feature type="active site" description="Nucleophile" evidence="1">
    <location>
        <position position="52"/>
    </location>
</feature>
<feature type="binding site" evidence="1">
    <location>
        <position position="110"/>
    </location>
    <ligand>
        <name>substrate</name>
    </ligand>
</feature>
<dbReference type="EC" id="5.4.99.12" evidence="1"/>
<dbReference type="EMBL" id="CP000568">
    <property type="protein sequence ID" value="ABN54137.1"/>
    <property type="molecule type" value="Genomic_DNA"/>
</dbReference>
<dbReference type="RefSeq" id="WP_003514691.1">
    <property type="nucleotide sequence ID" value="NC_009012.1"/>
</dbReference>
<dbReference type="SMR" id="A3DJK8"/>
<dbReference type="STRING" id="203119.Cthe_2939"/>
<dbReference type="GeneID" id="35804829"/>
<dbReference type="KEGG" id="cth:Cthe_2939"/>
<dbReference type="eggNOG" id="COG0101">
    <property type="taxonomic scope" value="Bacteria"/>
</dbReference>
<dbReference type="HOGENOM" id="CLU_014673_0_1_9"/>
<dbReference type="OrthoDB" id="9811823at2"/>
<dbReference type="Proteomes" id="UP000002145">
    <property type="component" value="Chromosome"/>
</dbReference>
<dbReference type="GO" id="GO:0003723">
    <property type="term" value="F:RNA binding"/>
    <property type="evidence" value="ECO:0007669"/>
    <property type="project" value="InterPro"/>
</dbReference>
<dbReference type="GO" id="GO:0160147">
    <property type="term" value="F:tRNA pseudouridine(38-40) synthase activity"/>
    <property type="evidence" value="ECO:0007669"/>
    <property type="project" value="UniProtKB-EC"/>
</dbReference>
<dbReference type="GO" id="GO:0031119">
    <property type="term" value="P:tRNA pseudouridine synthesis"/>
    <property type="evidence" value="ECO:0007669"/>
    <property type="project" value="UniProtKB-UniRule"/>
</dbReference>
<dbReference type="CDD" id="cd02570">
    <property type="entry name" value="PseudoU_synth_EcTruA"/>
    <property type="match status" value="1"/>
</dbReference>
<dbReference type="FunFam" id="3.30.70.580:FF:000001">
    <property type="entry name" value="tRNA pseudouridine synthase A"/>
    <property type="match status" value="1"/>
</dbReference>
<dbReference type="Gene3D" id="3.30.70.660">
    <property type="entry name" value="Pseudouridine synthase I, catalytic domain, C-terminal subdomain"/>
    <property type="match status" value="1"/>
</dbReference>
<dbReference type="Gene3D" id="3.30.70.580">
    <property type="entry name" value="Pseudouridine synthase I, catalytic domain, N-terminal subdomain"/>
    <property type="match status" value="1"/>
</dbReference>
<dbReference type="HAMAP" id="MF_00171">
    <property type="entry name" value="TruA"/>
    <property type="match status" value="1"/>
</dbReference>
<dbReference type="InterPro" id="IPR020103">
    <property type="entry name" value="PsdUridine_synth_cat_dom_sf"/>
</dbReference>
<dbReference type="InterPro" id="IPR001406">
    <property type="entry name" value="PsdUridine_synth_TruA"/>
</dbReference>
<dbReference type="InterPro" id="IPR020097">
    <property type="entry name" value="PsdUridine_synth_TruA_a/b_dom"/>
</dbReference>
<dbReference type="InterPro" id="IPR020095">
    <property type="entry name" value="PsdUridine_synth_TruA_C"/>
</dbReference>
<dbReference type="InterPro" id="IPR020094">
    <property type="entry name" value="TruA/RsuA/RluB/E/F_N"/>
</dbReference>
<dbReference type="NCBIfam" id="TIGR00071">
    <property type="entry name" value="hisT_truA"/>
    <property type="match status" value="1"/>
</dbReference>
<dbReference type="PANTHER" id="PTHR11142">
    <property type="entry name" value="PSEUDOURIDYLATE SYNTHASE"/>
    <property type="match status" value="1"/>
</dbReference>
<dbReference type="PANTHER" id="PTHR11142:SF0">
    <property type="entry name" value="TRNA PSEUDOURIDINE SYNTHASE-LIKE 1"/>
    <property type="match status" value="1"/>
</dbReference>
<dbReference type="Pfam" id="PF01416">
    <property type="entry name" value="PseudoU_synth_1"/>
    <property type="match status" value="2"/>
</dbReference>
<dbReference type="PIRSF" id="PIRSF001430">
    <property type="entry name" value="tRNA_psdUrid_synth"/>
    <property type="match status" value="1"/>
</dbReference>
<dbReference type="SUPFAM" id="SSF55120">
    <property type="entry name" value="Pseudouridine synthase"/>
    <property type="match status" value="1"/>
</dbReference>
<accession>A3DJK8</accession>
<proteinExistence type="inferred from homology"/>
<name>TRUA_ACET2</name>
<sequence>MRNVKLIIEYDGTNYHGWQKQKNAKTVQDTIERAIKGLTGEKVDLIGASRTDFGVHALGQVANFITNSGIPGDRFSYALNRMLPDDIVIKESQEVDMDFHARYKAKGKRYRYLIYNSQFPSALLRHRTYHVSHKLDFESMQRAASYFLGTHDFSAFRSSGSSAKTSVRTITDVSLEREDKIVKFEIAGDGFLYNMVRIIVGTLMEVGIGKIRADEIPQIIESRKRKRAGRTAPAEGLYLVEVYY</sequence>
<evidence type="ECO:0000255" key="1">
    <source>
        <dbReference type="HAMAP-Rule" id="MF_00171"/>
    </source>
</evidence>
<keyword id="KW-0413">Isomerase</keyword>
<keyword id="KW-1185">Reference proteome</keyword>
<keyword id="KW-0819">tRNA processing</keyword>
<comment type="function">
    <text evidence="1">Formation of pseudouridine at positions 38, 39 and 40 in the anticodon stem and loop of transfer RNAs.</text>
</comment>
<comment type="catalytic activity">
    <reaction evidence="1">
        <text>uridine(38/39/40) in tRNA = pseudouridine(38/39/40) in tRNA</text>
        <dbReference type="Rhea" id="RHEA:22376"/>
        <dbReference type="Rhea" id="RHEA-COMP:10085"/>
        <dbReference type="Rhea" id="RHEA-COMP:10087"/>
        <dbReference type="ChEBI" id="CHEBI:65314"/>
        <dbReference type="ChEBI" id="CHEBI:65315"/>
        <dbReference type="EC" id="5.4.99.12"/>
    </reaction>
</comment>
<comment type="subunit">
    <text evidence="1">Homodimer.</text>
</comment>
<comment type="similarity">
    <text evidence="1">Belongs to the tRNA pseudouridine synthase TruA family.</text>
</comment>
<reference key="1">
    <citation type="submission" date="2007-02" db="EMBL/GenBank/DDBJ databases">
        <title>Complete sequence of Clostridium thermocellum ATCC 27405.</title>
        <authorList>
            <consortium name="US DOE Joint Genome Institute"/>
            <person name="Copeland A."/>
            <person name="Lucas S."/>
            <person name="Lapidus A."/>
            <person name="Barry K."/>
            <person name="Detter J.C."/>
            <person name="Glavina del Rio T."/>
            <person name="Hammon N."/>
            <person name="Israni S."/>
            <person name="Dalin E."/>
            <person name="Tice H."/>
            <person name="Pitluck S."/>
            <person name="Chertkov O."/>
            <person name="Brettin T."/>
            <person name="Bruce D."/>
            <person name="Han C."/>
            <person name="Tapia R."/>
            <person name="Gilna P."/>
            <person name="Schmutz J."/>
            <person name="Larimer F."/>
            <person name="Land M."/>
            <person name="Hauser L."/>
            <person name="Kyrpides N."/>
            <person name="Mikhailova N."/>
            <person name="Wu J.H.D."/>
            <person name="Newcomb M."/>
            <person name="Richardson P."/>
        </authorList>
    </citation>
    <scope>NUCLEOTIDE SEQUENCE [LARGE SCALE GENOMIC DNA]</scope>
    <source>
        <strain>ATCC 27405 / DSM 1237 / JCM 9322 / NBRC 103400 / NCIMB 10682 / NRRL B-4536 / VPI 7372</strain>
    </source>
</reference>
<gene>
    <name evidence="1" type="primary">truA</name>
    <name type="ordered locus">Cthe_2939</name>
</gene>
<protein>
    <recommendedName>
        <fullName evidence="1">tRNA pseudouridine synthase A</fullName>
        <ecNumber evidence="1">5.4.99.12</ecNumber>
    </recommendedName>
    <alternativeName>
        <fullName evidence="1">tRNA pseudouridine(38-40) synthase</fullName>
    </alternativeName>
    <alternativeName>
        <fullName evidence="1">tRNA pseudouridylate synthase I</fullName>
    </alternativeName>
    <alternativeName>
        <fullName evidence="1">tRNA-uridine isomerase I</fullName>
    </alternativeName>
</protein>